<dbReference type="EMBL" id="CP000552">
    <property type="protein sequence ID" value="ABM72711.1"/>
    <property type="molecule type" value="Genomic_DNA"/>
</dbReference>
<dbReference type="RefSeq" id="WP_011820807.1">
    <property type="nucleotide sequence ID" value="NC_008817.1"/>
</dbReference>
<dbReference type="SMR" id="A2BY50"/>
<dbReference type="STRING" id="167542.P9515_15041"/>
<dbReference type="GeneID" id="60200656"/>
<dbReference type="KEGG" id="pmc:P9515_15041"/>
<dbReference type="eggNOG" id="COG4251">
    <property type="taxonomic scope" value="Bacteria"/>
</dbReference>
<dbReference type="HOGENOM" id="CLU_144073_0_0_3"/>
<dbReference type="OrthoDB" id="5458519at2"/>
<dbReference type="Proteomes" id="UP000001589">
    <property type="component" value="Chromosome"/>
</dbReference>
<dbReference type="GO" id="GO:0007623">
    <property type="term" value="P:circadian rhythm"/>
    <property type="evidence" value="ECO:0007669"/>
    <property type="project" value="UniProtKB-UniRule"/>
</dbReference>
<dbReference type="CDD" id="cd02978">
    <property type="entry name" value="KaiB_like"/>
    <property type="match status" value="1"/>
</dbReference>
<dbReference type="Gene3D" id="3.40.30.10">
    <property type="entry name" value="Glutaredoxin"/>
    <property type="match status" value="1"/>
</dbReference>
<dbReference type="HAMAP" id="MF_01835">
    <property type="entry name" value="KaiB"/>
    <property type="match status" value="1"/>
</dbReference>
<dbReference type="InterPro" id="IPR013474">
    <property type="entry name" value="Circ_KaiB"/>
</dbReference>
<dbReference type="InterPro" id="IPR039022">
    <property type="entry name" value="KaiB-like"/>
</dbReference>
<dbReference type="InterPro" id="IPR011649">
    <property type="entry name" value="KaiB_domain"/>
</dbReference>
<dbReference type="InterPro" id="IPR036249">
    <property type="entry name" value="Thioredoxin-like_sf"/>
</dbReference>
<dbReference type="NCBIfam" id="TIGR02654">
    <property type="entry name" value="circ_KaiB"/>
    <property type="match status" value="1"/>
</dbReference>
<dbReference type="NCBIfam" id="NF006798">
    <property type="entry name" value="PRK09301.1"/>
    <property type="match status" value="1"/>
</dbReference>
<dbReference type="PANTHER" id="PTHR41709:SF2">
    <property type="entry name" value="CIRCADIAN CLOCK PROTEIN KAIB2"/>
    <property type="match status" value="1"/>
</dbReference>
<dbReference type="PANTHER" id="PTHR41709">
    <property type="entry name" value="KAIB-LIKE PROTEIN 1"/>
    <property type="match status" value="1"/>
</dbReference>
<dbReference type="Pfam" id="PF07689">
    <property type="entry name" value="KaiB"/>
    <property type="match status" value="1"/>
</dbReference>
<dbReference type="SMART" id="SM01248">
    <property type="entry name" value="KaiB"/>
    <property type="match status" value="1"/>
</dbReference>
<dbReference type="SUPFAM" id="SSF52833">
    <property type="entry name" value="Thioredoxin-like"/>
    <property type="match status" value="1"/>
</dbReference>
<feature type="chain" id="PRO_1000070458" description="Circadian clock oscillator protein KaiB">
    <location>
        <begin position="1"/>
        <end position="108"/>
    </location>
</feature>
<sequence length="108" mass="12061">MAARKTYILKLYVAGNTPNSMRALNTLKEILENEFKGVYALKVIDVLKQPQLAEEDKILATPTLAKILPPPVRRIIGDLSDREKVLIGLDLLFDELSESELNGGKKNK</sequence>
<reference key="1">
    <citation type="journal article" date="2007" name="PLoS Genet.">
        <title>Patterns and implications of gene gain and loss in the evolution of Prochlorococcus.</title>
        <authorList>
            <person name="Kettler G.C."/>
            <person name="Martiny A.C."/>
            <person name="Huang K."/>
            <person name="Zucker J."/>
            <person name="Coleman M.L."/>
            <person name="Rodrigue S."/>
            <person name="Chen F."/>
            <person name="Lapidus A."/>
            <person name="Ferriera S."/>
            <person name="Johnson J."/>
            <person name="Steglich C."/>
            <person name="Church G.M."/>
            <person name="Richardson P."/>
            <person name="Chisholm S.W."/>
        </authorList>
    </citation>
    <scope>NUCLEOTIDE SEQUENCE [LARGE SCALE GENOMIC DNA]</scope>
    <source>
        <strain>MIT 9515</strain>
    </source>
</reference>
<comment type="function">
    <text evidence="1">Component of the KaiBC clock protein complex, which constitutes the main circadian regulator in cyanobacteria; it may modify the ATPase activity of KaiC.</text>
</comment>
<comment type="function">
    <text evidence="1">May be a metamorphic protein which reversibly switches between an inactive tetrameric fold and a rare, thioredoxin-like monomeric fold (KaiB(fs)). KaiB(fs) binds phospho-KaiC, and perhaps clock output effectors.</text>
</comment>
<comment type="subunit">
    <text evidence="1">May undergo a major conformational rearrangment; in the free state forms homooligomers. When bound to KaiC switches to a monomeric thioredoxin-fold (KaiB(fs)). The active oscillator complex is probably KaiC(6):KaiB(6).</text>
</comment>
<comment type="domain">
    <text evidence="1">Has 2 forms, fold switches to a thioredoxin-like fold (KaiB(fs)) when bound to KaiC.</text>
</comment>
<comment type="miscellaneous">
    <text evidence="1">The kiaA gene has been eliminated from Prochlorococcus during genome streamlining. It has been suggested that the central oscillator in Prochlorococcus does not have to be as robust as in other cyanobacteria because the former live in specific niches of the Earth's oceans; they divide exactly once a day and at the same time. Thus gene loss and changes in kaiB function compared to other cyanobacteria, can occur.</text>
</comment>
<comment type="similarity">
    <text evidence="1">Belongs to the KaiB family.</text>
</comment>
<accession>A2BY50</accession>
<name>KAIB_PROM5</name>
<proteinExistence type="inferred from homology"/>
<evidence type="ECO:0000255" key="1">
    <source>
        <dbReference type="HAMAP-Rule" id="MF_01835"/>
    </source>
</evidence>
<gene>
    <name evidence="1" type="primary">kaiB</name>
    <name type="ordered locus">P9515_15041</name>
</gene>
<organism>
    <name type="scientific">Prochlorococcus marinus (strain MIT 9515)</name>
    <dbReference type="NCBI Taxonomy" id="167542"/>
    <lineage>
        <taxon>Bacteria</taxon>
        <taxon>Bacillati</taxon>
        <taxon>Cyanobacteriota</taxon>
        <taxon>Cyanophyceae</taxon>
        <taxon>Synechococcales</taxon>
        <taxon>Prochlorococcaceae</taxon>
        <taxon>Prochlorococcus</taxon>
    </lineage>
</organism>
<protein>
    <recommendedName>
        <fullName evidence="1">Circadian clock oscillator protein KaiB</fullName>
    </recommendedName>
</protein>
<keyword id="KW-0090">Biological rhythms</keyword>